<protein>
    <recommendedName>
        <fullName>Tubulin beta chain</fullName>
    </recommendedName>
    <alternativeName>
        <fullName>Beta-tubulin</fullName>
    </alternativeName>
</protein>
<dbReference type="EMBL" id="Z69263">
    <property type="protein sequence ID" value="CAA93254.1"/>
    <property type="molecule type" value="Genomic_DNA"/>
</dbReference>
<dbReference type="EMBL" id="U27198">
    <property type="protein sequence ID" value="AAB60307.1"/>
    <property type="molecule type" value="Genomic_DNA"/>
</dbReference>
<dbReference type="EMBL" id="U28267">
    <property type="protein sequence ID" value="AAB60296.1"/>
    <property type="molecule type" value="Genomic_DNA"/>
</dbReference>
<dbReference type="SMR" id="P53373"/>
<dbReference type="GO" id="GO:0005737">
    <property type="term" value="C:cytoplasm"/>
    <property type="evidence" value="ECO:0007669"/>
    <property type="project" value="UniProtKB-KW"/>
</dbReference>
<dbReference type="GO" id="GO:0005874">
    <property type="term" value="C:microtubule"/>
    <property type="evidence" value="ECO:0007669"/>
    <property type="project" value="UniProtKB-KW"/>
</dbReference>
<dbReference type="GO" id="GO:0005525">
    <property type="term" value="F:GTP binding"/>
    <property type="evidence" value="ECO:0007669"/>
    <property type="project" value="UniProtKB-KW"/>
</dbReference>
<dbReference type="GO" id="GO:0003924">
    <property type="term" value="F:GTPase activity"/>
    <property type="evidence" value="ECO:0007669"/>
    <property type="project" value="InterPro"/>
</dbReference>
<dbReference type="GO" id="GO:0046872">
    <property type="term" value="F:metal ion binding"/>
    <property type="evidence" value="ECO:0007669"/>
    <property type="project" value="UniProtKB-KW"/>
</dbReference>
<dbReference type="GO" id="GO:0005200">
    <property type="term" value="F:structural constituent of cytoskeleton"/>
    <property type="evidence" value="ECO:0007669"/>
    <property type="project" value="InterPro"/>
</dbReference>
<dbReference type="GO" id="GO:0007017">
    <property type="term" value="P:microtubule-based process"/>
    <property type="evidence" value="ECO:0007669"/>
    <property type="project" value="InterPro"/>
</dbReference>
<dbReference type="GO" id="GO:0046677">
    <property type="term" value="P:response to antibiotic"/>
    <property type="evidence" value="ECO:0007669"/>
    <property type="project" value="UniProtKB-KW"/>
</dbReference>
<dbReference type="CDD" id="cd02187">
    <property type="entry name" value="beta_tubulin"/>
    <property type="match status" value="1"/>
</dbReference>
<dbReference type="FunFam" id="1.10.287.600:FF:000003">
    <property type="entry name" value="Tubulin beta chain"/>
    <property type="match status" value="1"/>
</dbReference>
<dbReference type="FunFam" id="3.30.1330.20:FF:000002">
    <property type="entry name" value="Tubulin beta chain"/>
    <property type="match status" value="1"/>
</dbReference>
<dbReference type="FunFam" id="3.40.50.1440:FF:000009">
    <property type="entry name" value="Tubulin beta chain"/>
    <property type="match status" value="1"/>
</dbReference>
<dbReference type="Gene3D" id="1.10.287.600">
    <property type="entry name" value="Helix hairpin bin"/>
    <property type="match status" value="1"/>
</dbReference>
<dbReference type="Gene3D" id="3.30.1330.20">
    <property type="entry name" value="Tubulin/FtsZ, C-terminal domain"/>
    <property type="match status" value="1"/>
</dbReference>
<dbReference type="Gene3D" id="3.40.50.1440">
    <property type="entry name" value="Tubulin/FtsZ, GTPase domain"/>
    <property type="match status" value="1"/>
</dbReference>
<dbReference type="InterPro" id="IPR013838">
    <property type="entry name" value="Beta-tubulin_BS"/>
</dbReference>
<dbReference type="InterPro" id="IPR002453">
    <property type="entry name" value="Beta_tubulin"/>
</dbReference>
<dbReference type="InterPro" id="IPR008280">
    <property type="entry name" value="Tub_FtsZ_C"/>
</dbReference>
<dbReference type="InterPro" id="IPR000217">
    <property type="entry name" value="Tubulin"/>
</dbReference>
<dbReference type="InterPro" id="IPR037103">
    <property type="entry name" value="Tubulin/FtsZ-like_C"/>
</dbReference>
<dbReference type="InterPro" id="IPR018316">
    <property type="entry name" value="Tubulin/FtsZ_2-layer-sand-dom"/>
</dbReference>
<dbReference type="InterPro" id="IPR036525">
    <property type="entry name" value="Tubulin/FtsZ_GTPase_sf"/>
</dbReference>
<dbReference type="InterPro" id="IPR023123">
    <property type="entry name" value="Tubulin_C"/>
</dbReference>
<dbReference type="InterPro" id="IPR017975">
    <property type="entry name" value="Tubulin_CS"/>
</dbReference>
<dbReference type="InterPro" id="IPR003008">
    <property type="entry name" value="Tubulin_FtsZ_GTPase"/>
</dbReference>
<dbReference type="PANTHER" id="PTHR11588">
    <property type="entry name" value="TUBULIN"/>
    <property type="match status" value="1"/>
</dbReference>
<dbReference type="Pfam" id="PF00091">
    <property type="entry name" value="Tubulin"/>
    <property type="match status" value="1"/>
</dbReference>
<dbReference type="Pfam" id="PF03953">
    <property type="entry name" value="Tubulin_C"/>
    <property type="match status" value="1"/>
</dbReference>
<dbReference type="PRINTS" id="PR01163">
    <property type="entry name" value="BETATUBULIN"/>
</dbReference>
<dbReference type="PRINTS" id="PR01161">
    <property type="entry name" value="TUBULIN"/>
</dbReference>
<dbReference type="SMART" id="SM00864">
    <property type="entry name" value="Tubulin"/>
    <property type="match status" value="1"/>
</dbReference>
<dbReference type="SMART" id="SM00865">
    <property type="entry name" value="Tubulin_C"/>
    <property type="match status" value="1"/>
</dbReference>
<dbReference type="SUPFAM" id="SSF55307">
    <property type="entry name" value="Tubulin C-terminal domain-like"/>
    <property type="match status" value="1"/>
</dbReference>
<dbReference type="SUPFAM" id="SSF52490">
    <property type="entry name" value="Tubulin nucleotide-binding domain-like"/>
    <property type="match status" value="1"/>
</dbReference>
<dbReference type="PROSITE" id="PS00227">
    <property type="entry name" value="TUBULIN"/>
    <property type="match status" value="1"/>
</dbReference>
<dbReference type="PROSITE" id="PS00228">
    <property type="entry name" value="TUBULIN_B_AUTOREG"/>
    <property type="match status" value="1"/>
</dbReference>
<reference key="1">
    <citation type="submission" date="1996-02" db="EMBL/GenBank/DDBJ databases">
        <authorList>
            <person name="van der Vlugt-Bergmans C.J.B."/>
            <person name="Jansen E.M."/>
            <person name="van't Klooster J.W."/>
            <person name="van Kan J.A.L."/>
        </authorList>
    </citation>
    <scope>NUCLEOTIDE SEQUENCE [GENOMIC DNA]</scope>
    <source>
        <strain>SAS56</strain>
    </source>
</reference>
<reference key="2">
    <citation type="submission" date="1995-10" db="EMBL/GenBank/DDBJ databases">
        <authorList>
            <person name="Lee C.W."/>
            <person name="Park S.Y."/>
            <person name="Jung O.J."/>
        </authorList>
    </citation>
    <scope>NUCLEOTIDE SEQUENCE [GENOMIC DNA]</scope>
    <source>
        <strain>91T-1</strain>
    </source>
</reference>
<reference key="3">
    <citation type="submission" date="1995-08" db="EMBL/GenBank/DDBJ databases">
        <authorList>
            <person name="Luck J.E."/>
            <person name="Gillings M.R."/>
        </authorList>
    </citation>
    <scope>NUCLEOTIDE SEQUENCE [GENOMIC DNA] OF 165-291</scope>
    <source>
        <strain>ICMP 8583</strain>
    </source>
</reference>
<sequence>MREIVHLQTGQCGNQIGAAFWQTISGEHGLDGSGVYNGTSDLQLERMNVYFNEASGNKYVPRAVLVDLEPGTMDAVRAGPFGQLFRPDNFVFGQSGAGNNWAKGHYTEGAELVDQVLDVVRREAEGCDCLQGFQITHSLGGGTGAGMGTLLISKIREEFPDRMMATFSVVPSPKVSDTVVEPYNATLSVHQLVENSDETFCIDNEALYDICMRTLKLSNPSYGDLNHLVSAVMSGVTTCLRFPGQLNSDLRKLAVNMVPFPRLHFFMVGFAPLTSRGAHSFRAVTVPELTQQMYDPKNMMAASDFRNGRYLTCSAIFRGKVSMKEVEDQMRNVQNKNSSYFVEWIPNNVQTALCSIPPRGLKMSSTFVGNSTSIQELFKRVGDQFTAMFRRKAFLHWYTGEGMDEMEFTEAESNMNDLVSEYQQYQDASISEGEEEYEEEVPIEGEE</sequence>
<feature type="chain" id="PRO_0000048396" description="Tubulin beta chain">
    <location>
        <begin position="1"/>
        <end position="447"/>
    </location>
</feature>
<feature type="region of interest" description="Disordered" evidence="3">
    <location>
        <begin position="425"/>
        <end position="447"/>
    </location>
</feature>
<feature type="compositionally biased region" description="Acidic residues" evidence="3">
    <location>
        <begin position="432"/>
        <end position="447"/>
    </location>
</feature>
<feature type="binding site" evidence="2">
    <location>
        <position position="11"/>
    </location>
    <ligand>
        <name>GTP</name>
        <dbReference type="ChEBI" id="CHEBI:37565"/>
    </ligand>
</feature>
<feature type="binding site" evidence="1">
    <location>
        <position position="69"/>
    </location>
    <ligand>
        <name>GTP</name>
        <dbReference type="ChEBI" id="CHEBI:37565"/>
    </ligand>
</feature>
<feature type="binding site" evidence="1">
    <location>
        <position position="69"/>
    </location>
    <ligand>
        <name>Mg(2+)</name>
        <dbReference type="ChEBI" id="CHEBI:18420"/>
    </ligand>
</feature>
<feature type="binding site" evidence="2">
    <location>
        <position position="138"/>
    </location>
    <ligand>
        <name>GTP</name>
        <dbReference type="ChEBI" id="CHEBI:37565"/>
    </ligand>
</feature>
<feature type="binding site" evidence="2">
    <location>
        <position position="142"/>
    </location>
    <ligand>
        <name>GTP</name>
        <dbReference type="ChEBI" id="CHEBI:37565"/>
    </ligand>
</feature>
<feature type="binding site" evidence="2">
    <location>
        <position position="143"/>
    </location>
    <ligand>
        <name>GTP</name>
        <dbReference type="ChEBI" id="CHEBI:37565"/>
    </ligand>
</feature>
<feature type="binding site" evidence="2">
    <location>
        <position position="144"/>
    </location>
    <ligand>
        <name>GTP</name>
        <dbReference type="ChEBI" id="CHEBI:37565"/>
    </ligand>
</feature>
<feature type="binding site" evidence="2">
    <location>
        <position position="204"/>
    </location>
    <ligand>
        <name>GTP</name>
        <dbReference type="ChEBI" id="CHEBI:37565"/>
    </ligand>
</feature>
<feature type="binding site" evidence="2">
    <location>
        <position position="226"/>
    </location>
    <ligand>
        <name>GTP</name>
        <dbReference type="ChEBI" id="CHEBI:37565"/>
    </ligand>
</feature>
<feature type="sequence variant" description="In resistance to benomyl and benzimidazole.">
    <original>E</original>
    <variation>A</variation>
    <location>
        <position position="198"/>
    </location>
</feature>
<feature type="sequence conflict" description="In Ref. 3; AAB60296." evidence="4" ref="3">
    <original>G</original>
    <variation>R</variation>
    <location>
        <position position="235"/>
    </location>
</feature>
<evidence type="ECO:0000250" key="1">
    <source>
        <dbReference type="UniProtKB" id="P68363"/>
    </source>
</evidence>
<evidence type="ECO:0000250" key="2">
    <source>
        <dbReference type="UniProtKB" id="Q13509"/>
    </source>
</evidence>
<evidence type="ECO:0000256" key="3">
    <source>
        <dbReference type="SAM" id="MobiDB-lite"/>
    </source>
</evidence>
<evidence type="ECO:0000305" key="4"/>
<name>TBB_BOTFU</name>
<accession>P53373</accession>
<organism>
    <name type="scientific">Botryotinia fuckeliana</name>
    <name type="common">Noble rot fungus</name>
    <name type="synonym">Botrytis cinerea</name>
    <dbReference type="NCBI Taxonomy" id="40559"/>
    <lineage>
        <taxon>Eukaryota</taxon>
        <taxon>Fungi</taxon>
        <taxon>Dikarya</taxon>
        <taxon>Ascomycota</taxon>
        <taxon>Pezizomycotina</taxon>
        <taxon>Leotiomycetes</taxon>
        <taxon>Helotiales</taxon>
        <taxon>Sclerotiniaceae</taxon>
        <taxon>Botrytis</taxon>
    </lineage>
</organism>
<comment type="function">
    <text>Tubulin is the major constituent of microtubules, a cylinder consisting of laterally associated linear protofilaments composed of alpha- and beta-tubulin heterodimers. Microtubules grow by the addition of GTP-tubulin dimers to the microtubule end, where a stabilizing cap forms. Below the cap, tubulin dimers are in GDP-bound state, owing to GTPase activity of alpha-tubulin.</text>
</comment>
<comment type="cofactor">
    <cofactor evidence="1">
        <name>Mg(2+)</name>
        <dbReference type="ChEBI" id="CHEBI:18420"/>
    </cofactor>
</comment>
<comment type="subunit">
    <text>Dimer of alpha and beta chains. A typical microtubule is a hollow water-filled tube with an outer diameter of 25 nm and an inner diameter of 15 nM. Alpha-beta heterodimers associate head-to-tail to form protofilaments running lengthwise along the microtubule wall with the beta-tubulin subunit facing the microtubule plus end conferring a structural polarity. Microtubules usually have 13 protofilaments but different protofilament numbers can be found in some organisms and specialized cells.</text>
</comment>
<comment type="subcellular location">
    <subcellularLocation>
        <location>Cytoplasm</location>
        <location>Cytoskeleton</location>
    </subcellularLocation>
</comment>
<comment type="similarity">
    <text evidence="4">Belongs to the tubulin family.</text>
</comment>
<gene>
    <name type="primary">tubA</name>
    <name type="synonym">benA</name>
    <name type="synonym">btuB</name>
</gene>
<keyword id="KW-0046">Antibiotic resistance</keyword>
<keyword id="KW-0963">Cytoplasm</keyword>
<keyword id="KW-0206">Cytoskeleton</keyword>
<keyword id="KW-0342">GTP-binding</keyword>
<keyword id="KW-0460">Magnesium</keyword>
<keyword id="KW-0479">Metal-binding</keyword>
<keyword id="KW-0493">Microtubule</keyword>
<keyword id="KW-0547">Nucleotide-binding</keyword>
<proteinExistence type="inferred from homology"/>